<reference key="1">
    <citation type="submission" date="2007-03" db="EMBL/GenBank/DDBJ databases">
        <title>Complete sequence of chromosome 1 of Burkholderia vietnamiensis G4.</title>
        <authorList>
            <consortium name="US DOE Joint Genome Institute"/>
            <person name="Copeland A."/>
            <person name="Lucas S."/>
            <person name="Lapidus A."/>
            <person name="Barry K."/>
            <person name="Detter J.C."/>
            <person name="Glavina del Rio T."/>
            <person name="Hammon N."/>
            <person name="Israni S."/>
            <person name="Dalin E."/>
            <person name="Tice H."/>
            <person name="Pitluck S."/>
            <person name="Chain P."/>
            <person name="Malfatti S."/>
            <person name="Shin M."/>
            <person name="Vergez L."/>
            <person name="Schmutz J."/>
            <person name="Larimer F."/>
            <person name="Land M."/>
            <person name="Hauser L."/>
            <person name="Kyrpides N."/>
            <person name="Tiedje J."/>
            <person name="Richardson P."/>
        </authorList>
    </citation>
    <scope>NUCLEOTIDE SEQUENCE [LARGE SCALE GENOMIC DNA]</scope>
    <source>
        <strain>G4 / LMG 22486</strain>
    </source>
</reference>
<organism>
    <name type="scientific">Burkholderia vietnamiensis (strain G4 / LMG 22486)</name>
    <name type="common">Burkholderia cepacia (strain R1808)</name>
    <dbReference type="NCBI Taxonomy" id="269482"/>
    <lineage>
        <taxon>Bacteria</taxon>
        <taxon>Pseudomonadati</taxon>
        <taxon>Pseudomonadota</taxon>
        <taxon>Betaproteobacteria</taxon>
        <taxon>Burkholderiales</taxon>
        <taxon>Burkholderiaceae</taxon>
        <taxon>Burkholderia</taxon>
        <taxon>Burkholderia cepacia complex</taxon>
    </lineage>
</organism>
<accession>A4JB95</accession>
<keyword id="KW-0067">ATP-binding</keyword>
<keyword id="KW-0131">Cell cycle</keyword>
<keyword id="KW-0132">Cell division</keyword>
<keyword id="KW-0133">Cell shape</keyword>
<keyword id="KW-0961">Cell wall biogenesis/degradation</keyword>
<keyword id="KW-0963">Cytoplasm</keyword>
<keyword id="KW-0436">Ligase</keyword>
<keyword id="KW-0547">Nucleotide-binding</keyword>
<keyword id="KW-0573">Peptidoglycan synthesis</keyword>
<dbReference type="EC" id="6.3.2.8" evidence="1"/>
<dbReference type="EMBL" id="CP000614">
    <property type="protein sequence ID" value="ABO53548.1"/>
    <property type="molecule type" value="Genomic_DNA"/>
</dbReference>
<dbReference type="SMR" id="A4JB95"/>
<dbReference type="KEGG" id="bvi:Bcep1808_0536"/>
<dbReference type="eggNOG" id="COG0773">
    <property type="taxonomic scope" value="Bacteria"/>
</dbReference>
<dbReference type="HOGENOM" id="CLU_028104_2_2_4"/>
<dbReference type="UniPathway" id="UPA00219"/>
<dbReference type="Proteomes" id="UP000002287">
    <property type="component" value="Chromosome 1"/>
</dbReference>
<dbReference type="GO" id="GO:0005737">
    <property type="term" value="C:cytoplasm"/>
    <property type="evidence" value="ECO:0007669"/>
    <property type="project" value="UniProtKB-SubCell"/>
</dbReference>
<dbReference type="GO" id="GO:0005524">
    <property type="term" value="F:ATP binding"/>
    <property type="evidence" value="ECO:0007669"/>
    <property type="project" value="UniProtKB-UniRule"/>
</dbReference>
<dbReference type="GO" id="GO:0008763">
    <property type="term" value="F:UDP-N-acetylmuramate-L-alanine ligase activity"/>
    <property type="evidence" value="ECO:0007669"/>
    <property type="project" value="UniProtKB-UniRule"/>
</dbReference>
<dbReference type="GO" id="GO:0051301">
    <property type="term" value="P:cell division"/>
    <property type="evidence" value="ECO:0007669"/>
    <property type="project" value="UniProtKB-KW"/>
</dbReference>
<dbReference type="GO" id="GO:0071555">
    <property type="term" value="P:cell wall organization"/>
    <property type="evidence" value="ECO:0007669"/>
    <property type="project" value="UniProtKB-KW"/>
</dbReference>
<dbReference type="GO" id="GO:0009252">
    <property type="term" value="P:peptidoglycan biosynthetic process"/>
    <property type="evidence" value="ECO:0007669"/>
    <property type="project" value="UniProtKB-UniRule"/>
</dbReference>
<dbReference type="GO" id="GO:0008360">
    <property type="term" value="P:regulation of cell shape"/>
    <property type="evidence" value="ECO:0007669"/>
    <property type="project" value="UniProtKB-KW"/>
</dbReference>
<dbReference type="FunFam" id="3.40.1190.10:FF:000001">
    <property type="entry name" value="UDP-N-acetylmuramate--L-alanine ligase"/>
    <property type="match status" value="1"/>
</dbReference>
<dbReference type="Gene3D" id="3.90.190.20">
    <property type="entry name" value="Mur ligase, C-terminal domain"/>
    <property type="match status" value="1"/>
</dbReference>
<dbReference type="Gene3D" id="3.40.1190.10">
    <property type="entry name" value="Mur-like, catalytic domain"/>
    <property type="match status" value="1"/>
</dbReference>
<dbReference type="Gene3D" id="3.40.50.720">
    <property type="entry name" value="NAD(P)-binding Rossmann-like Domain"/>
    <property type="match status" value="1"/>
</dbReference>
<dbReference type="HAMAP" id="MF_00046">
    <property type="entry name" value="MurC"/>
    <property type="match status" value="1"/>
</dbReference>
<dbReference type="InterPro" id="IPR036565">
    <property type="entry name" value="Mur-like_cat_sf"/>
</dbReference>
<dbReference type="InterPro" id="IPR004101">
    <property type="entry name" value="Mur_ligase_C"/>
</dbReference>
<dbReference type="InterPro" id="IPR036615">
    <property type="entry name" value="Mur_ligase_C_dom_sf"/>
</dbReference>
<dbReference type="InterPro" id="IPR013221">
    <property type="entry name" value="Mur_ligase_cen"/>
</dbReference>
<dbReference type="InterPro" id="IPR000713">
    <property type="entry name" value="Mur_ligase_N"/>
</dbReference>
<dbReference type="InterPro" id="IPR050061">
    <property type="entry name" value="MurCDEF_pg_biosynth"/>
</dbReference>
<dbReference type="InterPro" id="IPR005758">
    <property type="entry name" value="UDP-N-AcMur_Ala_ligase_MurC"/>
</dbReference>
<dbReference type="NCBIfam" id="TIGR01082">
    <property type="entry name" value="murC"/>
    <property type="match status" value="1"/>
</dbReference>
<dbReference type="PANTHER" id="PTHR43445:SF3">
    <property type="entry name" value="UDP-N-ACETYLMURAMATE--L-ALANINE LIGASE"/>
    <property type="match status" value="1"/>
</dbReference>
<dbReference type="PANTHER" id="PTHR43445">
    <property type="entry name" value="UDP-N-ACETYLMURAMATE--L-ALANINE LIGASE-RELATED"/>
    <property type="match status" value="1"/>
</dbReference>
<dbReference type="Pfam" id="PF01225">
    <property type="entry name" value="Mur_ligase"/>
    <property type="match status" value="1"/>
</dbReference>
<dbReference type="Pfam" id="PF02875">
    <property type="entry name" value="Mur_ligase_C"/>
    <property type="match status" value="1"/>
</dbReference>
<dbReference type="Pfam" id="PF08245">
    <property type="entry name" value="Mur_ligase_M"/>
    <property type="match status" value="1"/>
</dbReference>
<dbReference type="SUPFAM" id="SSF51984">
    <property type="entry name" value="MurCD N-terminal domain"/>
    <property type="match status" value="1"/>
</dbReference>
<dbReference type="SUPFAM" id="SSF53623">
    <property type="entry name" value="MurD-like peptide ligases, catalytic domain"/>
    <property type="match status" value="1"/>
</dbReference>
<dbReference type="SUPFAM" id="SSF53244">
    <property type="entry name" value="MurD-like peptide ligases, peptide-binding domain"/>
    <property type="match status" value="1"/>
</dbReference>
<gene>
    <name evidence="1" type="primary">murC</name>
    <name type="ordered locus">Bcep1808_0536</name>
</gene>
<evidence type="ECO:0000255" key="1">
    <source>
        <dbReference type="HAMAP-Rule" id="MF_00046"/>
    </source>
</evidence>
<feature type="chain" id="PRO_1000004325" description="UDP-N-acetylmuramate--L-alanine ligase">
    <location>
        <begin position="1"/>
        <end position="465"/>
    </location>
</feature>
<feature type="binding site" evidence="1">
    <location>
        <begin position="112"/>
        <end position="118"/>
    </location>
    <ligand>
        <name>ATP</name>
        <dbReference type="ChEBI" id="CHEBI:30616"/>
    </ligand>
</feature>
<sequence>MKHIVKHIHFVGIGGAGMSGIAEVLVNLGYEVSGSDLSRNAVTDRLAALGARIAIGHDAANIEGANAVVVSTAVRSDNPEVLAARHQRVPIVQRAVMLAELMRLKQGIAIAGTHGKTTTTSLVASVLAAGGLDPTFVIGGRLISAGANARLGTGDFIVAEADESDASFLNLYPVIEVITNIDADHMDTYGHDFARLKQAFIEFTQRLPFYGSAVVCVDDPNVRQIIPFISKPVVRYGLSADAQVRAENIDARDGRMHFTVIREGRSPLAVVLNLPGLHNVQNALAAIAIATDLGVSDDAIQLALAEFNGVGRRFQRYGEVPSADGGQYTLIDDYGHHPVEMAATIAAARGAFPGRRLVLAFQPHRYTRTRDCFDDFVNVLSTVDALVLTEVYAAGEAAIATANGDALSRALRTVGKVDPVFVATVDDVPDALAKVARNGDVVITMGAGSIGGVPAKIVQNTQQKG</sequence>
<protein>
    <recommendedName>
        <fullName evidence="1">UDP-N-acetylmuramate--L-alanine ligase</fullName>
        <ecNumber evidence="1">6.3.2.8</ecNumber>
    </recommendedName>
    <alternativeName>
        <fullName evidence="1">UDP-N-acetylmuramoyl-L-alanine synthetase</fullName>
    </alternativeName>
</protein>
<name>MURC_BURVG</name>
<proteinExistence type="inferred from homology"/>
<comment type="function">
    <text evidence="1">Cell wall formation.</text>
</comment>
<comment type="catalytic activity">
    <reaction evidence="1">
        <text>UDP-N-acetyl-alpha-D-muramate + L-alanine + ATP = UDP-N-acetyl-alpha-D-muramoyl-L-alanine + ADP + phosphate + H(+)</text>
        <dbReference type="Rhea" id="RHEA:23372"/>
        <dbReference type="ChEBI" id="CHEBI:15378"/>
        <dbReference type="ChEBI" id="CHEBI:30616"/>
        <dbReference type="ChEBI" id="CHEBI:43474"/>
        <dbReference type="ChEBI" id="CHEBI:57972"/>
        <dbReference type="ChEBI" id="CHEBI:70757"/>
        <dbReference type="ChEBI" id="CHEBI:83898"/>
        <dbReference type="ChEBI" id="CHEBI:456216"/>
        <dbReference type="EC" id="6.3.2.8"/>
    </reaction>
</comment>
<comment type="pathway">
    <text evidence="1">Cell wall biogenesis; peptidoglycan biosynthesis.</text>
</comment>
<comment type="subcellular location">
    <subcellularLocation>
        <location evidence="1">Cytoplasm</location>
    </subcellularLocation>
</comment>
<comment type="similarity">
    <text evidence="1">Belongs to the MurCDEF family.</text>
</comment>